<organismHost>
    <name type="scientific">Aves</name>
    <dbReference type="NCBI Taxonomy" id="8782"/>
</organismHost>
<organismHost>
    <name type="scientific">Equus caballus</name>
    <name type="common">Horse</name>
    <dbReference type="NCBI Taxonomy" id="9796"/>
</organismHost>
<accession>Q77ZK7</accession>
<sequence>MSLLTEVETYVLSIVPSGPLKAEIAQRLEDVFAGKNTDLEALMEWLKTRPILSPLTKGILGFVFTLTVPSERGLQRRRFVQNALSGNGDPNNMDRAVKLYRKLKREITFHGAKEVALSYSTGALASCMGLIYNRMGTVTTEVAFGLVCATCEQIADSQHRSHRQMVTTTNPLIRHENRMVLASTTAKAMEQMAGSSEQAAEAMEVASKARQMVQAMRTIGTHPSSSAGLKDDLLENLQAYQKRMGVQMQRFK</sequence>
<reference key="1">
    <citation type="journal article" date="1998" name="Arch. Virol.">
        <title>Phylogenetic analyses of the matrix and non-structural genes of equine influenza viruses.</title>
        <authorList>
            <person name="Lindstrom S."/>
            <person name="Endo A."/>
            <person name="Sugita S."/>
            <person name="Pecoraro M."/>
            <person name="Hiromoto Y."/>
            <person name="Kamada M."/>
            <person name="Takahashi T."/>
            <person name="Nerome K."/>
        </authorList>
    </citation>
    <scope>NUCLEOTIDE SEQUENCE [GENOMIC RNA]</scope>
</reference>
<dbReference type="EMBL" id="AF001679">
    <property type="protein sequence ID" value="AAC31282.1"/>
    <property type="molecule type" value="Genomic_RNA"/>
</dbReference>
<dbReference type="SMR" id="Q77ZK7"/>
<dbReference type="GO" id="GO:0042025">
    <property type="term" value="C:host cell nucleus"/>
    <property type="evidence" value="ECO:0007669"/>
    <property type="project" value="UniProtKB-SubCell"/>
</dbReference>
<dbReference type="GO" id="GO:0016020">
    <property type="term" value="C:membrane"/>
    <property type="evidence" value="ECO:0007669"/>
    <property type="project" value="UniProtKB-KW"/>
</dbReference>
<dbReference type="GO" id="GO:0055036">
    <property type="term" value="C:virion membrane"/>
    <property type="evidence" value="ECO:0007669"/>
    <property type="project" value="UniProtKB-SubCell"/>
</dbReference>
<dbReference type="GO" id="GO:0003723">
    <property type="term" value="F:RNA binding"/>
    <property type="evidence" value="ECO:0007669"/>
    <property type="project" value="UniProtKB-UniRule"/>
</dbReference>
<dbReference type="GO" id="GO:0039660">
    <property type="term" value="F:structural constituent of virion"/>
    <property type="evidence" value="ECO:0007669"/>
    <property type="project" value="UniProtKB-UniRule"/>
</dbReference>
<dbReference type="GO" id="GO:0046761">
    <property type="term" value="P:viral budding from plasma membrane"/>
    <property type="evidence" value="ECO:0007669"/>
    <property type="project" value="UniProtKB-UniRule"/>
</dbReference>
<dbReference type="FunFam" id="1.10.10.180:FF:000001">
    <property type="entry name" value="Matrix protein 1"/>
    <property type="match status" value="1"/>
</dbReference>
<dbReference type="FunFam" id="1.20.91.10:FF:000001">
    <property type="entry name" value="Matrix protein 1"/>
    <property type="match status" value="1"/>
</dbReference>
<dbReference type="Gene3D" id="1.10.10.180">
    <property type="match status" value="1"/>
</dbReference>
<dbReference type="Gene3D" id="1.20.91.10">
    <property type="match status" value="1"/>
</dbReference>
<dbReference type="HAMAP" id="MF_04068">
    <property type="entry name" value="INFV_M1"/>
    <property type="match status" value="1"/>
</dbReference>
<dbReference type="InterPro" id="IPR036039">
    <property type="entry name" value="Flu_matrix_M1"/>
</dbReference>
<dbReference type="InterPro" id="IPR013188">
    <property type="entry name" value="Flu_matrix_M1_C"/>
</dbReference>
<dbReference type="InterPro" id="IPR001561">
    <property type="entry name" value="Flu_matrix_M1_N"/>
</dbReference>
<dbReference type="InterPro" id="IPR015423">
    <property type="entry name" value="Flu_matrix_M1_N_sub1"/>
</dbReference>
<dbReference type="InterPro" id="IPR015799">
    <property type="entry name" value="Flu_matrix_M1_N_sub2"/>
</dbReference>
<dbReference type="InterPro" id="IPR037533">
    <property type="entry name" value="INFV_M1"/>
</dbReference>
<dbReference type="Pfam" id="PF00598">
    <property type="entry name" value="Flu_M1"/>
    <property type="match status" value="1"/>
</dbReference>
<dbReference type="Pfam" id="PF08289">
    <property type="entry name" value="Flu_M1_C"/>
    <property type="match status" value="1"/>
</dbReference>
<dbReference type="SMART" id="SM00759">
    <property type="entry name" value="Flu_M1_C"/>
    <property type="match status" value="1"/>
</dbReference>
<dbReference type="SUPFAM" id="SSF48145">
    <property type="entry name" value="Influenza virus matrix protein M1"/>
    <property type="match status" value="1"/>
</dbReference>
<gene>
    <name evidence="1" type="primary">M</name>
</gene>
<proteinExistence type="inferred from homology"/>
<evidence type="ECO:0000255" key="1">
    <source>
        <dbReference type="HAMAP-Rule" id="MF_04068"/>
    </source>
</evidence>
<comment type="function">
    <text evidence="1">Plays critical roles in virus replication, from virus entry and uncoating to assembly and budding of the virus particle. M1 binding to ribonucleocapsids (RNPs) in nucleus seems to inhibit viral transcription. Interaction of viral NEP with M1-RNP is thought to promote nuclear export of the complex, which is targeted to the virion assembly site at the apical plasma membrane in polarized epithelial cells. Interactions with NA and HA may bring M1, a non-raft-associated protein, into lipid rafts. Forms a continuous shell on the inner side of the lipid bilayer in virion, where it binds the RNP. During virus entry into cell, the M2 ion channel acidifies the internal virion core, inducing M1 dissociation from the RNP. M1-free RNPs are transported to the nucleus, where viral transcription and replication can take place.</text>
</comment>
<comment type="function">
    <text evidence="1">Determines the virion's shape: spherical or filamentous. Clinical isolates of influenza are characterized by the presence of significant proportion of filamentous virions, whereas after multiple passage on eggs or cell culture, virions have only spherical morphology. Filamentous virions are thought to be important to infect neighboring cells, and spherical virions more suited to spread through aerosol between hosts organisms.</text>
</comment>
<comment type="subunit">
    <text evidence="1">Homodimer and homomultimer. Interacts with NEP. Binds ribonucleocapsid by both interacting with genomic RNA and NP protein. May interact with HA and NA. Cannot bind NP without genomic RNA.</text>
</comment>
<comment type="subcellular location">
    <subcellularLocation>
        <location evidence="1">Virion membrane</location>
        <topology evidence="1">Peripheral membrane protein</topology>
        <orientation evidence="1">Cytoplasmic side</orientation>
    </subcellularLocation>
    <subcellularLocation>
        <location evidence="1">Host nucleus</location>
    </subcellularLocation>
</comment>
<comment type="alternative products">
    <event type="alternative splicing"/>
    <isoform>
        <id>Q77ZK7-1</id>
        <name>M1</name>
        <sequence type="displayed"/>
    </isoform>
    <isoform>
        <id>Q77ZK8-1</id>
        <name>M2</name>
        <sequence type="external"/>
    </isoform>
    <text>Only the first 9 residues are shared by the 2 isoforms.</text>
</comment>
<comment type="miscellaneous">
    <text evidence="1">Most abundant protein in virion. When expressed alone can form virus-like particles in transfected cells.</text>
</comment>
<comment type="similarity">
    <text evidence="1">Belongs to the influenza viruses Matrix protein M1 family.</text>
</comment>
<keyword id="KW-0025">Alternative splicing</keyword>
<keyword id="KW-1048">Host nucleus</keyword>
<keyword id="KW-0472">Membrane</keyword>
<keyword id="KW-0694">RNA-binding</keyword>
<keyword id="KW-0468">Viral matrix protein</keyword>
<keyword id="KW-0946">Virion</keyword>
<name>M1_I91A0</name>
<protein>
    <recommendedName>
        <fullName evidence="1">Matrix protein 1</fullName>
        <shortName evidence="1">M1</shortName>
    </recommendedName>
</protein>
<organism>
    <name type="scientific">Influenza A virus (strain A/Equine/Alaska/1/1991 H3N8)</name>
    <dbReference type="NCBI Taxonomy" id="387213"/>
    <lineage>
        <taxon>Viruses</taxon>
        <taxon>Riboviria</taxon>
        <taxon>Orthornavirae</taxon>
        <taxon>Negarnaviricota</taxon>
        <taxon>Polyploviricotina</taxon>
        <taxon>Insthoviricetes</taxon>
        <taxon>Articulavirales</taxon>
        <taxon>Orthomyxoviridae</taxon>
        <taxon>Alphainfluenzavirus</taxon>
        <taxon>Alphainfluenzavirus influenzae</taxon>
        <taxon>Influenza A virus</taxon>
    </lineage>
</organism>
<feature type="chain" id="PRO_0000326332" description="Matrix protein 1">
    <location>
        <begin position="1"/>
        <end position="252"/>
    </location>
</feature>
<feature type="region of interest" description="Membrane-binding" evidence="1">
    <location>
        <begin position="1"/>
        <end position="164"/>
    </location>
</feature>
<feature type="region of interest" description="RNP-binding" evidence="1">
    <location>
        <begin position="165"/>
        <end position="252"/>
    </location>
</feature>
<feature type="short sequence motif" description="Nuclear localization signal" evidence="1">
    <location>
        <begin position="101"/>
        <end position="105"/>
    </location>
</feature>